<gene>
    <name type="primary">Prepl</name>
</gene>
<comment type="function">
    <text evidence="1">Serine peptidase whose precise substrate specificity remains unclear (By similarity). Does not cleave peptides after a arginine or lysine residue (By similarity). Regulates trans-Golgi network morphology and sorting by regulating the membrane binding of the AP-1 complex (By similarity). May play a role in the regulation of synaptic vesicle exocytosis (By similarity).</text>
</comment>
<comment type="subunit">
    <text evidence="1">Homodimer (By similarity). Interacts with the AP-1 complex (By similarity).</text>
</comment>
<comment type="subcellular location">
    <subcellularLocation>
        <location evidence="1">Cytoplasm</location>
        <location evidence="1">Cytosol</location>
    </subcellularLocation>
    <subcellularLocation>
        <location evidence="2">Golgi apparatus</location>
        <location evidence="2">trans-Golgi network</location>
    </subcellularLocation>
    <subcellularLocation>
        <location evidence="2">Cytoplasm</location>
        <location evidence="2">Cytoskeleton</location>
    </subcellularLocation>
    <subcellularLocation>
        <location evidence="2">Golgi apparatus</location>
    </subcellularLocation>
    <subcellularLocation>
        <location evidence="1">Nucleus</location>
    </subcellularLocation>
    <text evidence="2">Co-localizes with AP-1 in the trans-Golgi network (By similarity). Co-localizes with MAP2 and ACTB on the cytoskeleton (By similarity). Co-localizes with STX6 and GOSR2 at the Golgi apparatus (By similarity).</text>
</comment>
<comment type="alternative products">
    <event type="alternative splicing"/>
    <isoform>
        <id>Q5HZA6-1</id>
        <name>1</name>
        <sequence type="displayed"/>
    </isoform>
    <isoform>
        <id>Q5HZA6-2</id>
        <name>2</name>
        <sequence type="described" ref="VSP_030409"/>
    </isoform>
</comment>
<comment type="similarity">
    <text evidence="4">Belongs to the peptidase S9A family.</text>
</comment>
<feature type="chain" id="PRO_0000314864" description="Prolyl endopeptidase-like">
    <location>
        <begin position="1"/>
        <end position="726"/>
    </location>
</feature>
<feature type="active site" description="Charge relay system" evidence="1">
    <location>
        <position position="558"/>
    </location>
</feature>
<feature type="active site" description="Charge relay system" evidence="1">
    <location>
        <position position="644"/>
    </location>
</feature>
<feature type="active site" description="Charge relay system" evidence="1">
    <location>
        <position position="689"/>
    </location>
</feature>
<feature type="modified residue" description="Phosphoserine" evidence="5">
    <location>
        <position position="138"/>
    </location>
</feature>
<feature type="splice variant" id="VSP_030409" description="In isoform 2." evidence="3">
    <location>
        <begin position="1"/>
        <end position="88"/>
    </location>
</feature>
<proteinExistence type="evidence at protein level"/>
<name>PPCEL_RAT</name>
<sequence>MQQTTKLFLGALKYSIPHLGKCMPKQNYCNVADPYYNRLRLKNYRLTKCLQNKPKISELARNIPSRSFSVKDKLEKPESLQKRGINICMDAFEKVRTRLETQPQEEYEIVNAEIKHGGFVYYQEGCCLVRSKDEEADSDNYEVLFNLEELKLEQPFIDCIRVAPDEKYVAAKIRAEDSETSTCIVVKLSDQPAMEASFPNVSSFEWVKDEEDEDVLFYTFQRNLRCHDVYRATFGDNKRNERFYTEKDPSYFVFLYLTKDSRFLTLNIMNKTTSEVWLIDGLSPWDPPMLIQKRIHGMLYYVEHRDDELYILTNVGEPTEFKLMRTAADAPAIMNWDLFFTMKRNTKVVDLDMFKDHCVLFLKHSNLLYVNVIGLADDSVRSLKLPPWACGFIMDTNSDPKNCPFQLCSPIRPPKYYTYKFAEGKLFEETGHEDPITKTSRVLRIEAKSKDGKLVPMTVFHKTDSEDLQRKPLLVHVYGAYGMDLKMNFRPERRVLVDDGWILAYCHVRGGGELGLQWHADGRLTKKLNGLADLEACIKTLHSQGFSQPSLTTLSAFSAGGVLVGALCNSKPELLRAVTLEAPFLDVLNTMMDTTLPLTLEELEEWGNPSSDEKHKNYIKRYCPCQNMKPQHYPSVHITAYENDERVPLKGIVNYTEKLKEAVAEHSKGAGEGYQPPNIVLDIQPGGNHVIEDSHKKITTQMKFLYDELGLDSTDAFEALKKYLKV</sequence>
<dbReference type="EC" id="3.4.21.-" evidence="1"/>
<dbReference type="EMBL" id="AABR03049307">
    <property type="status" value="NOT_ANNOTATED_CDS"/>
    <property type="molecule type" value="Genomic_DNA"/>
</dbReference>
<dbReference type="EMBL" id="AABR03050672">
    <property type="status" value="NOT_ANNOTATED_CDS"/>
    <property type="molecule type" value="Genomic_DNA"/>
</dbReference>
<dbReference type="EMBL" id="BC089111">
    <property type="protein sequence ID" value="AAH89111.1"/>
    <property type="molecule type" value="mRNA"/>
</dbReference>
<dbReference type="RefSeq" id="NP_001010951.1">
    <molecule id="Q5HZA6-2"/>
    <property type="nucleotide sequence ID" value="NM_001010951.2"/>
</dbReference>
<dbReference type="RefSeq" id="XP_008762679.1">
    <property type="nucleotide sequence ID" value="XM_008764457.2"/>
</dbReference>
<dbReference type="RefSeq" id="XP_008762680.1">
    <molecule id="Q5HZA6-2"/>
    <property type="nucleotide sequence ID" value="XM_008764458.4"/>
</dbReference>
<dbReference type="RefSeq" id="XP_063117680.1">
    <molecule id="Q5HZA6-2"/>
    <property type="nucleotide sequence ID" value="XM_063261610.1"/>
</dbReference>
<dbReference type="SMR" id="Q5HZA6"/>
<dbReference type="BioGRID" id="256016">
    <property type="interactions" value="1"/>
</dbReference>
<dbReference type="FunCoup" id="Q5HZA6">
    <property type="interactions" value="1931"/>
</dbReference>
<dbReference type="STRING" id="10116.ENSRNOP00000070154"/>
<dbReference type="ESTHER" id="ratno-q5hza6">
    <property type="family name" value="S9N_PREPL_Peptidase_S9"/>
</dbReference>
<dbReference type="MEROPS" id="S09.015"/>
<dbReference type="iPTMnet" id="Q5HZA6"/>
<dbReference type="PhosphoSitePlus" id="Q5HZA6"/>
<dbReference type="jPOST" id="Q5HZA6"/>
<dbReference type="PaxDb" id="10116-ENSRNOP00000009660"/>
<dbReference type="Ensembl" id="ENSRNOT00000082353.2">
    <molecule id="Q5HZA6-2"/>
    <property type="protein sequence ID" value="ENSRNOP00000070154.2"/>
    <property type="gene ID" value="ENSRNOG00000007326.9"/>
</dbReference>
<dbReference type="GeneID" id="298771"/>
<dbReference type="KEGG" id="rno:298771"/>
<dbReference type="UCSC" id="RGD:1310143">
    <molecule id="Q5HZA6-1"/>
    <property type="organism name" value="rat"/>
</dbReference>
<dbReference type="AGR" id="RGD:1310143"/>
<dbReference type="CTD" id="9581"/>
<dbReference type="RGD" id="1310143">
    <property type="gene designation" value="Prepl"/>
</dbReference>
<dbReference type="VEuPathDB" id="HostDB:ENSRNOG00000007326"/>
<dbReference type="eggNOG" id="KOG2237">
    <property type="taxonomic scope" value="Eukaryota"/>
</dbReference>
<dbReference type="GeneTree" id="ENSGT00530000063426"/>
<dbReference type="HOGENOM" id="CLU_011290_2_1_1"/>
<dbReference type="InParanoid" id="Q5HZA6"/>
<dbReference type="PhylomeDB" id="Q5HZA6"/>
<dbReference type="PRO" id="PR:Q5HZA6"/>
<dbReference type="Proteomes" id="UP000002494">
    <property type="component" value="Chromosome 6"/>
</dbReference>
<dbReference type="Bgee" id="ENSRNOG00000007326">
    <property type="expression patterns" value="Expressed in Ammon's horn and 20 other cell types or tissues"/>
</dbReference>
<dbReference type="ExpressionAtlas" id="Q5HZA6">
    <property type="expression patterns" value="baseline and differential"/>
</dbReference>
<dbReference type="GO" id="GO:0005856">
    <property type="term" value="C:cytoskeleton"/>
    <property type="evidence" value="ECO:0000266"/>
    <property type="project" value="RGD"/>
</dbReference>
<dbReference type="GO" id="GO:0005829">
    <property type="term" value="C:cytosol"/>
    <property type="evidence" value="ECO:0007669"/>
    <property type="project" value="UniProtKB-SubCell"/>
</dbReference>
<dbReference type="GO" id="GO:0005794">
    <property type="term" value="C:Golgi apparatus"/>
    <property type="evidence" value="ECO:0000266"/>
    <property type="project" value="RGD"/>
</dbReference>
<dbReference type="GO" id="GO:0005634">
    <property type="term" value="C:nucleus"/>
    <property type="evidence" value="ECO:0007669"/>
    <property type="project" value="UniProtKB-SubCell"/>
</dbReference>
<dbReference type="GO" id="GO:0005802">
    <property type="term" value="C:trans-Golgi network"/>
    <property type="evidence" value="ECO:0000266"/>
    <property type="project" value="RGD"/>
</dbReference>
<dbReference type="GO" id="GO:0008233">
    <property type="term" value="F:peptidase activity"/>
    <property type="evidence" value="ECO:0000250"/>
    <property type="project" value="UniProtKB"/>
</dbReference>
<dbReference type="GO" id="GO:0004252">
    <property type="term" value="F:serine-type endopeptidase activity"/>
    <property type="evidence" value="ECO:0007669"/>
    <property type="project" value="InterPro"/>
</dbReference>
<dbReference type="GO" id="GO:0043001">
    <property type="term" value="P:Golgi to plasma membrane protein transport"/>
    <property type="evidence" value="ECO:0000250"/>
    <property type="project" value="UniProtKB"/>
</dbReference>
<dbReference type="GO" id="GO:0006508">
    <property type="term" value="P:proteolysis"/>
    <property type="evidence" value="ECO:0007669"/>
    <property type="project" value="UniProtKB-KW"/>
</dbReference>
<dbReference type="GO" id="GO:2000300">
    <property type="term" value="P:regulation of synaptic vesicle exocytosis"/>
    <property type="evidence" value="ECO:0000250"/>
    <property type="project" value="UniProtKB"/>
</dbReference>
<dbReference type="GO" id="GO:0042147">
    <property type="term" value="P:retrograde transport, endosome to Golgi"/>
    <property type="evidence" value="ECO:0000250"/>
    <property type="project" value="UniProtKB"/>
</dbReference>
<dbReference type="FunFam" id="2.130.10.120:FF:000002">
    <property type="entry name" value="prolyl endopeptidase-like isoform X1"/>
    <property type="match status" value="1"/>
</dbReference>
<dbReference type="FunFam" id="3.40.50.1820:FF:000050">
    <property type="entry name" value="prolyl endopeptidase-like isoform X2"/>
    <property type="match status" value="1"/>
</dbReference>
<dbReference type="Gene3D" id="3.40.50.1820">
    <property type="entry name" value="alpha/beta hydrolase"/>
    <property type="match status" value="1"/>
</dbReference>
<dbReference type="Gene3D" id="2.130.10.120">
    <property type="entry name" value="Prolyl oligopeptidase, N-terminal domain"/>
    <property type="match status" value="1"/>
</dbReference>
<dbReference type="InterPro" id="IPR029058">
    <property type="entry name" value="AB_hydrolase_fold"/>
</dbReference>
<dbReference type="InterPro" id="IPR023302">
    <property type="entry name" value="Pept_S9A_N"/>
</dbReference>
<dbReference type="InterPro" id="IPR001375">
    <property type="entry name" value="Peptidase_S9_cat"/>
</dbReference>
<dbReference type="InterPro" id="IPR002470">
    <property type="entry name" value="Peptidase_S9A"/>
</dbReference>
<dbReference type="InterPro" id="IPR051543">
    <property type="entry name" value="Serine_Peptidase_S9A"/>
</dbReference>
<dbReference type="PANTHER" id="PTHR11757:SF19">
    <property type="entry name" value="PROLYL ENDOPEPTIDASE-LIKE"/>
    <property type="match status" value="1"/>
</dbReference>
<dbReference type="PANTHER" id="PTHR11757">
    <property type="entry name" value="PROTEASE FAMILY S9A OLIGOPEPTIDASE"/>
    <property type="match status" value="1"/>
</dbReference>
<dbReference type="Pfam" id="PF00326">
    <property type="entry name" value="Peptidase_S9"/>
    <property type="match status" value="1"/>
</dbReference>
<dbReference type="Pfam" id="PF02897">
    <property type="entry name" value="Peptidase_S9_N"/>
    <property type="match status" value="1"/>
</dbReference>
<dbReference type="PRINTS" id="PR00862">
    <property type="entry name" value="PROLIGOPTASE"/>
</dbReference>
<dbReference type="SUPFAM" id="SSF53474">
    <property type="entry name" value="alpha/beta-Hydrolases"/>
    <property type="match status" value="1"/>
</dbReference>
<dbReference type="SUPFAM" id="SSF50993">
    <property type="entry name" value="Peptidase/esterase 'gauge' domain"/>
    <property type="match status" value="1"/>
</dbReference>
<keyword id="KW-0025">Alternative splicing</keyword>
<keyword id="KW-0963">Cytoplasm</keyword>
<keyword id="KW-0206">Cytoskeleton</keyword>
<keyword id="KW-0333">Golgi apparatus</keyword>
<keyword id="KW-0378">Hydrolase</keyword>
<keyword id="KW-0539">Nucleus</keyword>
<keyword id="KW-0597">Phosphoprotein</keyword>
<keyword id="KW-0645">Protease</keyword>
<keyword id="KW-1185">Reference proteome</keyword>
<keyword id="KW-0720">Serine protease</keyword>
<protein>
    <recommendedName>
        <fullName>Prolyl endopeptidase-like</fullName>
        <ecNumber evidence="1">3.4.21.-</ecNumber>
    </recommendedName>
    <alternativeName>
        <fullName>Prolylendopeptidase-like</fullName>
    </alternativeName>
</protein>
<reference key="1">
    <citation type="journal article" date="2004" name="Nature">
        <title>Genome sequence of the Brown Norway rat yields insights into mammalian evolution.</title>
        <authorList>
            <person name="Gibbs R.A."/>
            <person name="Weinstock G.M."/>
            <person name="Metzker M.L."/>
            <person name="Muzny D.M."/>
            <person name="Sodergren E.J."/>
            <person name="Scherer S."/>
            <person name="Scott G."/>
            <person name="Steffen D."/>
            <person name="Worley K.C."/>
            <person name="Burch P.E."/>
            <person name="Okwuonu G."/>
            <person name="Hines S."/>
            <person name="Lewis L."/>
            <person name="Deramo C."/>
            <person name="Delgado O."/>
            <person name="Dugan-Rocha S."/>
            <person name="Miner G."/>
            <person name="Morgan M."/>
            <person name="Hawes A."/>
            <person name="Gill R."/>
            <person name="Holt R.A."/>
            <person name="Adams M.D."/>
            <person name="Amanatides P.G."/>
            <person name="Baden-Tillson H."/>
            <person name="Barnstead M."/>
            <person name="Chin S."/>
            <person name="Evans C.A."/>
            <person name="Ferriera S."/>
            <person name="Fosler C."/>
            <person name="Glodek A."/>
            <person name="Gu Z."/>
            <person name="Jennings D."/>
            <person name="Kraft C.L."/>
            <person name="Nguyen T."/>
            <person name="Pfannkoch C.M."/>
            <person name="Sitter C."/>
            <person name="Sutton G.G."/>
            <person name="Venter J.C."/>
            <person name="Woodage T."/>
            <person name="Smith D."/>
            <person name="Lee H.-M."/>
            <person name="Gustafson E."/>
            <person name="Cahill P."/>
            <person name="Kana A."/>
            <person name="Doucette-Stamm L."/>
            <person name="Weinstock K."/>
            <person name="Fechtel K."/>
            <person name="Weiss R.B."/>
            <person name="Dunn D.M."/>
            <person name="Green E.D."/>
            <person name="Blakesley R.W."/>
            <person name="Bouffard G.G."/>
            <person name="De Jong P.J."/>
            <person name="Osoegawa K."/>
            <person name="Zhu B."/>
            <person name="Marra M."/>
            <person name="Schein J."/>
            <person name="Bosdet I."/>
            <person name="Fjell C."/>
            <person name="Jones S."/>
            <person name="Krzywinski M."/>
            <person name="Mathewson C."/>
            <person name="Siddiqui A."/>
            <person name="Wye N."/>
            <person name="McPherson J."/>
            <person name="Zhao S."/>
            <person name="Fraser C.M."/>
            <person name="Shetty J."/>
            <person name="Shatsman S."/>
            <person name="Geer K."/>
            <person name="Chen Y."/>
            <person name="Abramzon S."/>
            <person name="Nierman W.C."/>
            <person name="Havlak P.H."/>
            <person name="Chen R."/>
            <person name="Durbin K.J."/>
            <person name="Egan A."/>
            <person name="Ren Y."/>
            <person name="Song X.-Z."/>
            <person name="Li B."/>
            <person name="Liu Y."/>
            <person name="Qin X."/>
            <person name="Cawley S."/>
            <person name="Cooney A.J."/>
            <person name="D'Souza L.M."/>
            <person name="Martin K."/>
            <person name="Wu J.Q."/>
            <person name="Gonzalez-Garay M.L."/>
            <person name="Jackson A.R."/>
            <person name="Kalafus K.J."/>
            <person name="McLeod M.P."/>
            <person name="Milosavljevic A."/>
            <person name="Virk D."/>
            <person name="Volkov A."/>
            <person name="Wheeler D.A."/>
            <person name="Zhang Z."/>
            <person name="Bailey J.A."/>
            <person name="Eichler E.E."/>
            <person name="Tuzun E."/>
            <person name="Birney E."/>
            <person name="Mongin E."/>
            <person name="Ureta-Vidal A."/>
            <person name="Woodwark C."/>
            <person name="Zdobnov E."/>
            <person name="Bork P."/>
            <person name="Suyama M."/>
            <person name="Torrents D."/>
            <person name="Alexandersson M."/>
            <person name="Trask B.J."/>
            <person name="Young J.M."/>
            <person name="Huang H."/>
            <person name="Wang H."/>
            <person name="Xing H."/>
            <person name="Daniels S."/>
            <person name="Gietzen D."/>
            <person name="Schmidt J."/>
            <person name="Stevens K."/>
            <person name="Vitt U."/>
            <person name="Wingrove J."/>
            <person name="Camara F."/>
            <person name="Mar Alba M."/>
            <person name="Abril J.F."/>
            <person name="Guigo R."/>
            <person name="Smit A."/>
            <person name="Dubchak I."/>
            <person name="Rubin E.M."/>
            <person name="Couronne O."/>
            <person name="Poliakov A."/>
            <person name="Huebner N."/>
            <person name="Ganten D."/>
            <person name="Goesele C."/>
            <person name="Hummel O."/>
            <person name="Kreitler T."/>
            <person name="Lee Y.-A."/>
            <person name="Monti J."/>
            <person name="Schulz H."/>
            <person name="Zimdahl H."/>
            <person name="Himmelbauer H."/>
            <person name="Lehrach H."/>
            <person name="Jacob H.J."/>
            <person name="Bromberg S."/>
            <person name="Gullings-Handley J."/>
            <person name="Jensen-Seaman M.I."/>
            <person name="Kwitek A.E."/>
            <person name="Lazar J."/>
            <person name="Pasko D."/>
            <person name="Tonellato P.J."/>
            <person name="Twigger S."/>
            <person name="Ponting C.P."/>
            <person name="Duarte J.M."/>
            <person name="Rice S."/>
            <person name="Goodstadt L."/>
            <person name="Beatson S.A."/>
            <person name="Emes R.D."/>
            <person name="Winter E.E."/>
            <person name="Webber C."/>
            <person name="Brandt P."/>
            <person name="Nyakatura G."/>
            <person name="Adetobi M."/>
            <person name="Chiaromonte F."/>
            <person name="Elnitski L."/>
            <person name="Eswara P."/>
            <person name="Hardison R.C."/>
            <person name="Hou M."/>
            <person name="Kolbe D."/>
            <person name="Makova K."/>
            <person name="Miller W."/>
            <person name="Nekrutenko A."/>
            <person name="Riemer C."/>
            <person name="Schwartz S."/>
            <person name="Taylor J."/>
            <person name="Yang S."/>
            <person name="Zhang Y."/>
            <person name="Lindpaintner K."/>
            <person name="Andrews T.D."/>
            <person name="Caccamo M."/>
            <person name="Clamp M."/>
            <person name="Clarke L."/>
            <person name="Curwen V."/>
            <person name="Durbin R.M."/>
            <person name="Eyras E."/>
            <person name="Searle S.M."/>
            <person name="Cooper G.M."/>
            <person name="Batzoglou S."/>
            <person name="Brudno M."/>
            <person name="Sidow A."/>
            <person name="Stone E.A."/>
            <person name="Payseur B.A."/>
            <person name="Bourque G."/>
            <person name="Lopez-Otin C."/>
            <person name="Puente X.S."/>
            <person name="Chakrabarti K."/>
            <person name="Chatterji S."/>
            <person name="Dewey C."/>
            <person name="Pachter L."/>
            <person name="Bray N."/>
            <person name="Yap V.B."/>
            <person name="Caspi A."/>
            <person name="Tesler G."/>
            <person name="Pevzner P.A."/>
            <person name="Haussler D."/>
            <person name="Roskin K.M."/>
            <person name="Baertsch R."/>
            <person name="Clawson H."/>
            <person name="Furey T.S."/>
            <person name="Hinrichs A.S."/>
            <person name="Karolchik D."/>
            <person name="Kent W.J."/>
            <person name="Rosenbloom K.R."/>
            <person name="Trumbower H."/>
            <person name="Weirauch M."/>
            <person name="Cooper D.N."/>
            <person name="Stenson P.D."/>
            <person name="Ma B."/>
            <person name="Brent M."/>
            <person name="Arumugam M."/>
            <person name="Shteynberg D."/>
            <person name="Copley R.R."/>
            <person name="Taylor M.S."/>
            <person name="Riethman H."/>
            <person name="Mudunuri U."/>
            <person name="Peterson J."/>
            <person name="Guyer M."/>
            <person name="Felsenfeld A."/>
            <person name="Old S."/>
            <person name="Mockrin S."/>
            <person name="Collins F.S."/>
        </authorList>
    </citation>
    <scope>NUCLEOTIDE SEQUENCE [LARGE SCALE GENOMIC DNA]</scope>
    <source>
        <strain>Brown Norway</strain>
    </source>
</reference>
<reference key="2">
    <citation type="journal article" date="2004" name="Genome Res.">
        <title>The status, quality, and expansion of the NIH full-length cDNA project: the Mammalian Gene Collection (MGC).</title>
        <authorList>
            <consortium name="The MGC Project Team"/>
        </authorList>
    </citation>
    <scope>NUCLEOTIDE SEQUENCE [LARGE SCALE MRNA] (ISOFORM 2)</scope>
    <source>
        <tissue>Brain</tissue>
    </source>
</reference>
<reference key="3">
    <citation type="journal article" date="2012" name="Nat. Commun.">
        <title>Quantitative maps of protein phosphorylation sites across 14 different rat organs and tissues.</title>
        <authorList>
            <person name="Lundby A."/>
            <person name="Secher A."/>
            <person name="Lage K."/>
            <person name="Nordsborg N.B."/>
            <person name="Dmytriyev A."/>
            <person name="Lundby C."/>
            <person name="Olsen J.V."/>
        </authorList>
    </citation>
    <scope>PHOSPHORYLATION [LARGE SCALE ANALYSIS] AT SER-138</scope>
    <scope>IDENTIFICATION BY MASS SPECTROMETRY [LARGE SCALE ANALYSIS]</scope>
</reference>
<evidence type="ECO:0000250" key="1">
    <source>
        <dbReference type="UniProtKB" id="Q4J6C6"/>
    </source>
</evidence>
<evidence type="ECO:0000250" key="2">
    <source>
        <dbReference type="UniProtKB" id="Q8C167"/>
    </source>
</evidence>
<evidence type="ECO:0000303" key="3">
    <source>
    </source>
</evidence>
<evidence type="ECO:0000305" key="4"/>
<evidence type="ECO:0007744" key="5">
    <source>
    </source>
</evidence>
<organism>
    <name type="scientific">Rattus norvegicus</name>
    <name type="common">Rat</name>
    <dbReference type="NCBI Taxonomy" id="10116"/>
    <lineage>
        <taxon>Eukaryota</taxon>
        <taxon>Metazoa</taxon>
        <taxon>Chordata</taxon>
        <taxon>Craniata</taxon>
        <taxon>Vertebrata</taxon>
        <taxon>Euteleostomi</taxon>
        <taxon>Mammalia</taxon>
        <taxon>Eutheria</taxon>
        <taxon>Euarchontoglires</taxon>
        <taxon>Glires</taxon>
        <taxon>Rodentia</taxon>
        <taxon>Myomorpha</taxon>
        <taxon>Muroidea</taxon>
        <taxon>Muridae</taxon>
        <taxon>Murinae</taxon>
        <taxon>Rattus</taxon>
    </lineage>
</organism>
<accession>Q5HZA6</accession>